<gene>
    <name evidence="1" type="primary">pheS</name>
    <name type="ordered locus">CA_C2357</name>
</gene>
<sequence>MKEKLEAIKEKALNELKSAVDKKNIEEIRVKYLGKKGELTQILRGMGALSSEERPIIGKLANEVRSKLESLIVEASEKIKDAEKKTRLESEIIDISMPGKRQTIGHRHPTYLTLNKVENIFRDMGFVIEEGPEVEYDKYNFEMLNIPKNHPARGEQDTFYINDNVVLRTQTSPVQVRTMLNQKPPIKMISPGKVYRSDAADATHSPIFYQVEGLVVDKGITFADLKGTLETFAKKMFGENVKMKFRPHHFPFTEPSAESDVTCFACGGEGCRVCKGEGWIELWGCGMVHPNVLRNCGIDPEVYSGFAFGMGLDRIVMLNYGIDDIRQLYESDMRFLKQF</sequence>
<comment type="catalytic activity">
    <reaction evidence="1">
        <text>tRNA(Phe) + L-phenylalanine + ATP = L-phenylalanyl-tRNA(Phe) + AMP + diphosphate + H(+)</text>
        <dbReference type="Rhea" id="RHEA:19413"/>
        <dbReference type="Rhea" id="RHEA-COMP:9668"/>
        <dbReference type="Rhea" id="RHEA-COMP:9699"/>
        <dbReference type="ChEBI" id="CHEBI:15378"/>
        <dbReference type="ChEBI" id="CHEBI:30616"/>
        <dbReference type="ChEBI" id="CHEBI:33019"/>
        <dbReference type="ChEBI" id="CHEBI:58095"/>
        <dbReference type="ChEBI" id="CHEBI:78442"/>
        <dbReference type="ChEBI" id="CHEBI:78531"/>
        <dbReference type="ChEBI" id="CHEBI:456215"/>
        <dbReference type="EC" id="6.1.1.20"/>
    </reaction>
</comment>
<comment type="cofactor">
    <cofactor evidence="1">
        <name>Mg(2+)</name>
        <dbReference type="ChEBI" id="CHEBI:18420"/>
    </cofactor>
    <text evidence="1">Binds 2 magnesium ions per tetramer.</text>
</comment>
<comment type="subunit">
    <text evidence="1">Tetramer of two alpha and two beta subunits.</text>
</comment>
<comment type="subcellular location">
    <subcellularLocation>
        <location evidence="1">Cytoplasm</location>
    </subcellularLocation>
</comment>
<comment type="similarity">
    <text evidence="1">Belongs to the class-II aminoacyl-tRNA synthetase family. Phe-tRNA synthetase alpha subunit type 1 subfamily.</text>
</comment>
<name>SYFA_CLOAB</name>
<keyword id="KW-0030">Aminoacyl-tRNA synthetase</keyword>
<keyword id="KW-0067">ATP-binding</keyword>
<keyword id="KW-0963">Cytoplasm</keyword>
<keyword id="KW-0436">Ligase</keyword>
<keyword id="KW-0460">Magnesium</keyword>
<keyword id="KW-0479">Metal-binding</keyword>
<keyword id="KW-0547">Nucleotide-binding</keyword>
<keyword id="KW-0648">Protein biosynthesis</keyword>
<keyword id="KW-1185">Reference proteome</keyword>
<dbReference type="EC" id="6.1.1.20" evidence="1"/>
<dbReference type="EMBL" id="AE001437">
    <property type="protein sequence ID" value="AAK80313.1"/>
    <property type="molecule type" value="Genomic_DNA"/>
</dbReference>
<dbReference type="PIR" id="F97190">
    <property type="entry name" value="F97190"/>
</dbReference>
<dbReference type="RefSeq" id="NP_348973.1">
    <property type="nucleotide sequence ID" value="NC_003030.1"/>
</dbReference>
<dbReference type="RefSeq" id="WP_010965654.1">
    <property type="nucleotide sequence ID" value="NC_003030.1"/>
</dbReference>
<dbReference type="SMR" id="Q97GK9"/>
<dbReference type="STRING" id="272562.CA_C2357"/>
<dbReference type="GeneID" id="44998832"/>
<dbReference type="KEGG" id="cac:CA_C2357"/>
<dbReference type="PATRIC" id="fig|272562.8.peg.2553"/>
<dbReference type="eggNOG" id="COG0016">
    <property type="taxonomic scope" value="Bacteria"/>
</dbReference>
<dbReference type="HOGENOM" id="CLU_025086_0_1_9"/>
<dbReference type="OrthoDB" id="9800719at2"/>
<dbReference type="Proteomes" id="UP000000814">
    <property type="component" value="Chromosome"/>
</dbReference>
<dbReference type="GO" id="GO:0005737">
    <property type="term" value="C:cytoplasm"/>
    <property type="evidence" value="ECO:0007669"/>
    <property type="project" value="UniProtKB-SubCell"/>
</dbReference>
<dbReference type="GO" id="GO:0005524">
    <property type="term" value="F:ATP binding"/>
    <property type="evidence" value="ECO:0007669"/>
    <property type="project" value="UniProtKB-UniRule"/>
</dbReference>
<dbReference type="GO" id="GO:0140096">
    <property type="term" value="F:catalytic activity, acting on a protein"/>
    <property type="evidence" value="ECO:0007669"/>
    <property type="project" value="UniProtKB-ARBA"/>
</dbReference>
<dbReference type="GO" id="GO:0000287">
    <property type="term" value="F:magnesium ion binding"/>
    <property type="evidence" value="ECO:0007669"/>
    <property type="project" value="UniProtKB-UniRule"/>
</dbReference>
<dbReference type="GO" id="GO:0004826">
    <property type="term" value="F:phenylalanine-tRNA ligase activity"/>
    <property type="evidence" value="ECO:0007669"/>
    <property type="project" value="UniProtKB-UniRule"/>
</dbReference>
<dbReference type="GO" id="GO:0016740">
    <property type="term" value="F:transferase activity"/>
    <property type="evidence" value="ECO:0007669"/>
    <property type="project" value="UniProtKB-ARBA"/>
</dbReference>
<dbReference type="GO" id="GO:0000049">
    <property type="term" value="F:tRNA binding"/>
    <property type="evidence" value="ECO:0007669"/>
    <property type="project" value="InterPro"/>
</dbReference>
<dbReference type="GO" id="GO:0006432">
    <property type="term" value="P:phenylalanyl-tRNA aminoacylation"/>
    <property type="evidence" value="ECO:0007669"/>
    <property type="project" value="UniProtKB-UniRule"/>
</dbReference>
<dbReference type="CDD" id="cd00496">
    <property type="entry name" value="PheRS_alpha_core"/>
    <property type="match status" value="1"/>
</dbReference>
<dbReference type="FunFam" id="3.30.930.10:FF:000003">
    <property type="entry name" value="Phenylalanine--tRNA ligase alpha subunit"/>
    <property type="match status" value="1"/>
</dbReference>
<dbReference type="Gene3D" id="3.30.930.10">
    <property type="entry name" value="Bira Bifunctional Protein, Domain 2"/>
    <property type="match status" value="1"/>
</dbReference>
<dbReference type="HAMAP" id="MF_00281">
    <property type="entry name" value="Phe_tRNA_synth_alpha1"/>
    <property type="match status" value="1"/>
</dbReference>
<dbReference type="InterPro" id="IPR006195">
    <property type="entry name" value="aa-tRNA-synth_II"/>
</dbReference>
<dbReference type="InterPro" id="IPR045864">
    <property type="entry name" value="aa-tRNA-synth_II/BPL/LPL"/>
</dbReference>
<dbReference type="InterPro" id="IPR004529">
    <property type="entry name" value="Phe-tRNA-synth_IIc_asu"/>
</dbReference>
<dbReference type="InterPro" id="IPR004188">
    <property type="entry name" value="Phe-tRNA_ligase_II_N"/>
</dbReference>
<dbReference type="InterPro" id="IPR022911">
    <property type="entry name" value="Phe_tRNA_ligase_alpha1_bac"/>
</dbReference>
<dbReference type="InterPro" id="IPR002319">
    <property type="entry name" value="Phenylalanyl-tRNA_Synthase"/>
</dbReference>
<dbReference type="InterPro" id="IPR010978">
    <property type="entry name" value="tRNA-bd_arm"/>
</dbReference>
<dbReference type="NCBIfam" id="TIGR00468">
    <property type="entry name" value="pheS"/>
    <property type="match status" value="1"/>
</dbReference>
<dbReference type="PANTHER" id="PTHR11538:SF41">
    <property type="entry name" value="PHENYLALANINE--TRNA LIGASE, MITOCHONDRIAL"/>
    <property type="match status" value="1"/>
</dbReference>
<dbReference type="PANTHER" id="PTHR11538">
    <property type="entry name" value="PHENYLALANYL-TRNA SYNTHETASE"/>
    <property type="match status" value="1"/>
</dbReference>
<dbReference type="Pfam" id="PF02912">
    <property type="entry name" value="Phe_tRNA-synt_N"/>
    <property type="match status" value="1"/>
</dbReference>
<dbReference type="Pfam" id="PF01409">
    <property type="entry name" value="tRNA-synt_2d"/>
    <property type="match status" value="1"/>
</dbReference>
<dbReference type="SUPFAM" id="SSF55681">
    <property type="entry name" value="Class II aaRS and biotin synthetases"/>
    <property type="match status" value="1"/>
</dbReference>
<dbReference type="SUPFAM" id="SSF46589">
    <property type="entry name" value="tRNA-binding arm"/>
    <property type="match status" value="1"/>
</dbReference>
<dbReference type="PROSITE" id="PS50862">
    <property type="entry name" value="AA_TRNA_LIGASE_II"/>
    <property type="match status" value="1"/>
</dbReference>
<protein>
    <recommendedName>
        <fullName evidence="1">Phenylalanine--tRNA ligase alpha subunit</fullName>
        <ecNumber evidence="1">6.1.1.20</ecNumber>
    </recommendedName>
    <alternativeName>
        <fullName evidence="1">Phenylalanyl-tRNA synthetase alpha subunit</fullName>
        <shortName evidence="1">PheRS</shortName>
    </alternativeName>
</protein>
<evidence type="ECO:0000255" key="1">
    <source>
        <dbReference type="HAMAP-Rule" id="MF_00281"/>
    </source>
</evidence>
<proteinExistence type="inferred from homology"/>
<reference key="1">
    <citation type="journal article" date="2001" name="J. Bacteriol.">
        <title>Genome sequence and comparative analysis of the solvent-producing bacterium Clostridium acetobutylicum.</title>
        <authorList>
            <person name="Noelling J."/>
            <person name="Breton G."/>
            <person name="Omelchenko M.V."/>
            <person name="Makarova K.S."/>
            <person name="Zeng Q."/>
            <person name="Gibson R."/>
            <person name="Lee H.M."/>
            <person name="Dubois J."/>
            <person name="Qiu D."/>
            <person name="Hitti J."/>
            <person name="Wolf Y.I."/>
            <person name="Tatusov R.L."/>
            <person name="Sabathe F."/>
            <person name="Doucette-Stamm L.A."/>
            <person name="Soucaille P."/>
            <person name="Daly M.J."/>
            <person name="Bennett G.N."/>
            <person name="Koonin E.V."/>
            <person name="Smith D.R."/>
        </authorList>
    </citation>
    <scope>NUCLEOTIDE SEQUENCE [LARGE SCALE GENOMIC DNA]</scope>
    <source>
        <strain>ATCC 824 / DSM 792 / JCM 1419 / IAM 19013 / LMG 5710 / NBRC 13948 / NRRL B-527 / VKM B-1787 / 2291 / W</strain>
    </source>
</reference>
<feature type="chain" id="PRO_0000126691" description="Phenylalanine--tRNA ligase alpha subunit">
    <location>
        <begin position="1"/>
        <end position="339"/>
    </location>
</feature>
<feature type="binding site" evidence="1">
    <location>
        <position position="254"/>
    </location>
    <ligand>
        <name>Mg(2+)</name>
        <dbReference type="ChEBI" id="CHEBI:18420"/>
        <note>shared with beta subunit</note>
    </ligand>
</feature>
<organism>
    <name type="scientific">Clostridium acetobutylicum (strain ATCC 824 / DSM 792 / JCM 1419 / IAM 19013 / LMG 5710 / NBRC 13948 / NRRL B-527 / VKM B-1787 / 2291 / W)</name>
    <dbReference type="NCBI Taxonomy" id="272562"/>
    <lineage>
        <taxon>Bacteria</taxon>
        <taxon>Bacillati</taxon>
        <taxon>Bacillota</taxon>
        <taxon>Clostridia</taxon>
        <taxon>Eubacteriales</taxon>
        <taxon>Clostridiaceae</taxon>
        <taxon>Clostridium</taxon>
    </lineage>
</organism>
<accession>Q97GK9</accession>